<dbReference type="EMBL" id="CP000255">
    <property type="protein sequence ID" value="ABD20641.1"/>
    <property type="molecule type" value="Genomic_DNA"/>
</dbReference>
<dbReference type="RefSeq" id="WP_001280006.1">
    <property type="nucleotide sequence ID" value="NZ_CP027476.1"/>
</dbReference>
<dbReference type="SMR" id="Q2FHH9"/>
<dbReference type="KEGG" id="saa:SAUSA300_1152"/>
<dbReference type="HOGENOM" id="CLU_073981_2_0_9"/>
<dbReference type="Proteomes" id="UP000001939">
    <property type="component" value="Chromosome"/>
</dbReference>
<dbReference type="GO" id="GO:0005737">
    <property type="term" value="C:cytoplasm"/>
    <property type="evidence" value="ECO:0007669"/>
    <property type="project" value="UniProtKB-SubCell"/>
</dbReference>
<dbReference type="GO" id="GO:0043023">
    <property type="term" value="F:ribosomal large subunit binding"/>
    <property type="evidence" value="ECO:0007669"/>
    <property type="project" value="TreeGrafter"/>
</dbReference>
<dbReference type="GO" id="GO:0006415">
    <property type="term" value="P:translational termination"/>
    <property type="evidence" value="ECO:0007669"/>
    <property type="project" value="UniProtKB-UniRule"/>
</dbReference>
<dbReference type="CDD" id="cd00520">
    <property type="entry name" value="RRF"/>
    <property type="match status" value="1"/>
</dbReference>
<dbReference type="FunFam" id="1.10.132.20:FF:000001">
    <property type="entry name" value="Ribosome-recycling factor"/>
    <property type="match status" value="1"/>
</dbReference>
<dbReference type="FunFam" id="3.30.1360.40:FF:000001">
    <property type="entry name" value="Ribosome-recycling factor"/>
    <property type="match status" value="1"/>
</dbReference>
<dbReference type="Gene3D" id="3.30.1360.40">
    <property type="match status" value="1"/>
</dbReference>
<dbReference type="Gene3D" id="1.10.132.20">
    <property type="entry name" value="Ribosome-recycling factor"/>
    <property type="match status" value="1"/>
</dbReference>
<dbReference type="HAMAP" id="MF_00040">
    <property type="entry name" value="RRF"/>
    <property type="match status" value="1"/>
</dbReference>
<dbReference type="InterPro" id="IPR002661">
    <property type="entry name" value="Ribosome_recyc_fac"/>
</dbReference>
<dbReference type="InterPro" id="IPR023584">
    <property type="entry name" value="Ribosome_recyc_fac_dom"/>
</dbReference>
<dbReference type="InterPro" id="IPR036191">
    <property type="entry name" value="RRF_sf"/>
</dbReference>
<dbReference type="NCBIfam" id="TIGR00496">
    <property type="entry name" value="frr"/>
    <property type="match status" value="1"/>
</dbReference>
<dbReference type="PANTHER" id="PTHR20982:SF3">
    <property type="entry name" value="MITOCHONDRIAL RIBOSOME RECYCLING FACTOR PSEUDO 1"/>
    <property type="match status" value="1"/>
</dbReference>
<dbReference type="PANTHER" id="PTHR20982">
    <property type="entry name" value="RIBOSOME RECYCLING FACTOR"/>
    <property type="match status" value="1"/>
</dbReference>
<dbReference type="Pfam" id="PF01765">
    <property type="entry name" value="RRF"/>
    <property type="match status" value="1"/>
</dbReference>
<dbReference type="SUPFAM" id="SSF55194">
    <property type="entry name" value="Ribosome recycling factor, RRF"/>
    <property type="match status" value="1"/>
</dbReference>
<accession>Q2FHH9</accession>
<reference key="1">
    <citation type="journal article" date="2006" name="Lancet">
        <title>Complete genome sequence of USA300, an epidemic clone of community-acquired meticillin-resistant Staphylococcus aureus.</title>
        <authorList>
            <person name="Diep B.A."/>
            <person name="Gill S.R."/>
            <person name="Chang R.F."/>
            <person name="Phan T.H."/>
            <person name="Chen J.H."/>
            <person name="Davidson M.G."/>
            <person name="Lin F."/>
            <person name="Lin J."/>
            <person name="Carleton H.A."/>
            <person name="Mongodin E.F."/>
            <person name="Sensabaugh G.F."/>
            <person name="Perdreau-Remington F."/>
        </authorList>
    </citation>
    <scope>NUCLEOTIDE SEQUENCE [LARGE SCALE GENOMIC DNA]</scope>
    <source>
        <strain>USA300</strain>
    </source>
</reference>
<proteinExistence type="inferred from homology"/>
<gene>
    <name evidence="1" type="primary">frr</name>
    <name type="ordered locus">SAUSA300_1152</name>
</gene>
<sequence length="184" mass="20353">MSDIINETKSRMQKSIESLSRELANISAGRANSNLLNGVTVDYYGAPTPVQQLASINVPEARLLVISPYDKTSVADIEKAIIAANLGVNPTSDGEVIRIAVPALTEERRKERVKDVKKIGEEAKVSVRNIRRDMNDQLKKDEKNGDITEDELRSGTEDVQKATDNSIKEIDQMIADKEKDIMSV</sequence>
<name>RRF_STAA3</name>
<organism>
    <name type="scientific">Staphylococcus aureus (strain USA300)</name>
    <dbReference type="NCBI Taxonomy" id="367830"/>
    <lineage>
        <taxon>Bacteria</taxon>
        <taxon>Bacillati</taxon>
        <taxon>Bacillota</taxon>
        <taxon>Bacilli</taxon>
        <taxon>Bacillales</taxon>
        <taxon>Staphylococcaceae</taxon>
        <taxon>Staphylococcus</taxon>
    </lineage>
</organism>
<protein>
    <recommendedName>
        <fullName evidence="1">Ribosome-recycling factor</fullName>
        <shortName evidence="1">RRF</shortName>
    </recommendedName>
    <alternativeName>
        <fullName evidence="1">Ribosome-releasing factor</fullName>
    </alternativeName>
</protein>
<evidence type="ECO:0000255" key="1">
    <source>
        <dbReference type="HAMAP-Rule" id="MF_00040"/>
    </source>
</evidence>
<evidence type="ECO:0000256" key="2">
    <source>
        <dbReference type="SAM" id="MobiDB-lite"/>
    </source>
</evidence>
<keyword id="KW-0963">Cytoplasm</keyword>
<keyword id="KW-0648">Protein biosynthesis</keyword>
<feature type="chain" id="PRO_1000003276" description="Ribosome-recycling factor">
    <location>
        <begin position="1"/>
        <end position="184"/>
    </location>
</feature>
<feature type="region of interest" description="Disordered" evidence="2">
    <location>
        <begin position="134"/>
        <end position="167"/>
    </location>
</feature>
<comment type="function">
    <text evidence="1">Responsible for the release of ribosomes from messenger RNA at the termination of protein biosynthesis. May increase the efficiency of translation by recycling ribosomes from one round of translation to another.</text>
</comment>
<comment type="subcellular location">
    <subcellularLocation>
        <location evidence="1">Cytoplasm</location>
    </subcellularLocation>
</comment>
<comment type="similarity">
    <text evidence="1">Belongs to the RRF family.</text>
</comment>